<comment type="function">
    <text evidence="1">Part of the ABC transporter complex CcmAB involved in the biogenesis of c-type cytochromes; once thought to export heme, this seems not to be the case, but its exact role is uncertain. Responsible for energy coupling to the transport system.</text>
</comment>
<comment type="catalytic activity">
    <reaction evidence="1">
        <text>heme b(in) + ATP + H2O = heme b(out) + ADP + phosphate + H(+)</text>
        <dbReference type="Rhea" id="RHEA:19261"/>
        <dbReference type="ChEBI" id="CHEBI:15377"/>
        <dbReference type="ChEBI" id="CHEBI:15378"/>
        <dbReference type="ChEBI" id="CHEBI:30616"/>
        <dbReference type="ChEBI" id="CHEBI:43474"/>
        <dbReference type="ChEBI" id="CHEBI:60344"/>
        <dbReference type="ChEBI" id="CHEBI:456216"/>
        <dbReference type="EC" id="7.6.2.5"/>
    </reaction>
</comment>
<comment type="subunit">
    <text evidence="1">The complex is composed of two ATP-binding proteins (CcmA) and two transmembrane proteins (CcmB).</text>
</comment>
<comment type="subcellular location">
    <subcellularLocation>
        <location evidence="1">Cell inner membrane</location>
        <topology evidence="1">Peripheral membrane protein</topology>
    </subcellularLocation>
</comment>
<comment type="similarity">
    <text evidence="1">Belongs to the ABC transporter superfamily. CcmA exporter (TC 3.A.1.107) family.</text>
</comment>
<evidence type="ECO:0000255" key="1">
    <source>
        <dbReference type="HAMAP-Rule" id="MF_01707"/>
    </source>
</evidence>
<feature type="chain" id="PRO_0000271935" description="Cytochrome c biogenesis ATP-binding export protein CcmA">
    <location>
        <begin position="1"/>
        <end position="200"/>
    </location>
</feature>
<feature type="domain" description="ABC transporter" evidence="1">
    <location>
        <begin position="1"/>
        <end position="200"/>
    </location>
</feature>
<feature type="binding site" evidence="1">
    <location>
        <begin position="35"/>
        <end position="42"/>
    </location>
    <ligand>
        <name>ATP</name>
        <dbReference type="ChEBI" id="CHEBI:30616"/>
    </ligand>
</feature>
<dbReference type="EC" id="7.6.2.5" evidence="1"/>
<dbReference type="EMBL" id="CP000115">
    <property type="protein sequence ID" value="ABA03589.1"/>
    <property type="molecule type" value="Genomic_DNA"/>
</dbReference>
<dbReference type="RefSeq" id="WP_011313654.1">
    <property type="nucleotide sequence ID" value="NC_007406.1"/>
</dbReference>
<dbReference type="SMR" id="Q3SVV2"/>
<dbReference type="STRING" id="323098.Nwi_0322"/>
<dbReference type="KEGG" id="nwi:Nwi_0322"/>
<dbReference type="eggNOG" id="COG4133">
    <property type="taxonomic scope" value="Bacteria"/>
</dbReference>
<dbReference type="HOGENOM" id="CLU_000604_1_2_5"/>
<dbReference type="OrthoDB" id="9800654at2"/>
<dbReference type="Proteomes" id="UP000002531">
    <property type="component" value="Chromosome"/>
</dbReference>
<dbReference type="GO" id="GO:0005886">
    <property type="term" value="C:plasma membrane"/>
    <property type="evidence" value="ECO:0007669"/>
    <property type="project" value="UniProtKB-SubCell"/>
</dbReference>
<dbReference type="GO" id="GO:0015439">
    <property type="term" value="F:ABC-type heme transporter activity"/>
    <property type="evidence" value="ECO:0007669"/>
    <property type="project" value="UniProtKB-EC"/>
</dbReference>
<dbReference type="GO" id="GO:0005524">
    <property type="term" value="F:ATP binding"/>
    <property type="evidence" value="ECO:0007669"/>
    <property type="project" value="UniProtKB-KW"/>
</dbReference>
<dbReference type="GO" id="GO:0016887">
    <property type="term" value="F:ATP hydrolysis activity"/>
    <property type="evidence" value="ECO:0007669"/>
    <property type="project" value="InterPro"/>
</dbReference>
<dbReference type="GO" id="GO:0017004">
    <property type="term" value="P:cytochrome complex assembly"/>
    <property type="evidence" value="ECO:0007669"/>
    <property type="project" value="UniProtKB-KW"/>
</dbReference>
<dbReference type="Gene3D" id="3.40.50.300">
    <property type="entry name" value="P-loop containing nucleotide triphosphate hydrolases"/>
    <property type="match status" value="1"/>
</dbReference>
<dbReference type="InterPro" id="IPR003593">
    <property type="entry name" value="AAA+_ATPase"/>
</dbReference>
<dbReference type="InterPro" id="IPR003439">
    <property type="entry name" value="ABC_transporter-like_ATP-bd"/>
</dbReference>
<dbReference type="InterPro" id="IPR017871">
    <property type="entry name" value="ABC_transporter-like_CS"/>
</dbReference>
<dbReference type="InterPro" id="IPR005895">
    <property type="entry name" value="ABC_transptr_haem_export_CcmA"/>
</dbReference>
<dbReference type="InterPro" id="IPR027417">
    <property type="entry name" value="P-loop_NTPase"/>
</dbReference>
<dbReference type="NCBIfam" id="TIGR01189">
    <property type="entry name" value="ccmA"/>
    <property type="match status" value="1"/>
</dbReference>
<dbReference type="PANTHER" id="PTHR43499">
    <property type="entry name" value="ABC TRANSPORTER I FAMILY MEMBER 1"/>
    <property type="match status" value="1"/>
</dbReference>
<dbReference type="PANTHER" id="PTHR43499:SF1">
    <property type="entry name" value="ABC TRANSPORTER I FAMILY MEMBER 1"/>
    <property type="match status" value="1"/>
</dbReference>
<dbReference type="Pfam" id="PF00005">
    <property type="entry name" value="ABC_tran"/>
    <property type="match status" value="1"/>
</dbReference>
<dbReference type="SMART" id="SM00382">
    <property type="entry name" value="AAA"/>
    <property type="match status" value="1"/>
</dbReference>
<dbReference type="SUPFAM" id="SSF52540">
    <property type="entry name" value="P-loop containing nucleoside triphosphate hydrolases"/>
    <property type="match status" value="1"/>
</dbReference>
<dbReference type="PROSITE" id="PS00211">
    <property type="entry name" value="ABC_TRANSPORTER_1"/>
    <property type="match status" value="1"/>
</dbReference>
<dbReference type="PROSITE" id="PS50893">
    <property type="entry name" value="ABC_TRANSPORTER_2"/>
    <property type="match status" value="1"/>
</dbReference>
<dbReference type="PROSITE" id="PS51243">
    <property type="entry name" value="CCMA"/>
    <property type="match status" value="1"/>
</dbReference>
<proteinExistence type="inferred from homology"/>
<reference key="1">
    <citation type="journal article" date="2006" name="Appl. Environ. Microbiol.">
        <title>Genome sequence of the chemolithoautotrophic nitrite-oxidizing bacterium Nitrobacter winogradskyi Nb-255.</title>
        <authorList>
            <person name="Starkenburg S.R."/>
            <person name="Chain P.S.G."/>
            <person name="Sayavedra-Soto L.A."/>
            <person name="Hauser L."/>
            <person name="Land M.L."/>
            <person name="Larimer F.W."/>
            <person name="Malfatti S.A."/>
            <person name="Klotz M.G."/>
            <person name="Bottomley P.J."/>
            <person name="Arp D.J."/>
            <person name="Hickey W.J."/>
        </authorList>
    </citation>
    <scope>NUCLEOTIDE SEQUENCE [LARGE SCALE GENOMIC DNA]</scope>
    <source>
        <strain>ATCC 25391 / DSM 10237 / CIP 104748 / NCIMB 11846 / Nb-255</strain>
    </source>
</reference>
<protein>
    <recommendedName>
        <fullName evidence="1">Cytochrome c biogenesis ATP-binding export protein CcmA</fullName>
        <ecNumber evidence="1">7.6.2.5</ecNumber>
    </recommendedName>
    <alternativeName>
        <fullName evidence="1">Heme exporter protein A</fullName>
    </alternativeName>
</protein>
<organism>
    <name type="scientific">Nitrobacter winogradskyi (strain ATCC 25391 / DSM 10237 / CIP 104748 / NCIMB 11846 / Nb-255)</name>
    <dbReference type="NCBI Taxonomy" id="323098"/>
    <lineage>
        <taxon>Bacteria</taxon>
        <taxon>Pseudomonadati</taxon>
        <taxon>Pseudomonadota</taxon>
        <taxon>Alphaproteobacteria</taxon>
        <taxon>Hyphomicrobiales</taxon>
        <taxon>Nitrobacteraceae</taxon>
        <taxon>Nitrobacter</taxon>
    </lineage>
</organism>
<accession>Q3SVV2</accession>
<gene>
    <name evidence="1" type="primary">ccmA</name>
    <name type="ordered locus">Nwi_0322</name>
</gene>
<keyword id="KW-0067">ATP-binding</keyword>
<keyword id="KW-0997">Cell inner membrane</keyword>
<keyword id="KW-1003">Cell membrane</keyword>
<keyword id="KW-0201">Cytochrome c-type biogenesis</keyword>
<keyword id="KW-0472">Membrane</keyword>
<keyword id="KW-0547">Nucleotide-binding</keyword>
<keyword id="KW-1185">Reference proteome</keyword>
<keyword id="KW-1278">Translocase</keyword>
<keyword id="KW-0813">Transport</keyword>
<sequence length="200" mass="20463">MRLSGNGLRCVRGGREVFSGLDVAAESGHAVAITGPNGAGKTSLLRLLAGLLAIADGSISLEGGDPELTLPEQAHYLGHRDALKPALTVSENLSFWRDFLGGGKSGESDALAAVGLDHVAHLPAAYLSAGQRRRLSIARLLAVKRPVWLLDEPTSALDVTGQAAFAAIMTGHLAGGGIILAATHTPLGIAARELRIGGAA</sequence>
<name>CCMA_NITWN</name>